<reference key="1">
    <citation type="journal article" date="2003" name="Insect Biochem. Mol. Biol.">
        <title>An arthropod defensin expressed by the hemocytes of the American dog tick, Dermacentor variabilis (Acari: Ixodidae).</title>
        <authorList>
            <person name="Ceraul S.M."/>
            <person name="Sonenshine D.E."/>
            <person name="Ratzlaff R.E."/>
            <person name="Hynes W.L."/>
        </authorList>
    </citation>
    <scope>NUCLEOTIDE SEQUENCE [MRNA]</scope>
    <source>
        <tissue>Hemocyte</tissue>
    </source>
</reference>
<reference evidence="5" key="2">
    <citation type="journal article" date="2001" name="Insect Biochem. Mol. Biol.">
        <title>Identification of a defensin from the hemolymph of the American dog tick, Dermacentor variabilis.</title>
        <authorList>
            <person name="Johns R."/>
            <person name="Sonenshine D.E."/>
            <person name="Hynes W.L."/>
        </authorList>
    </citation>
    <scope>PROTEIN SEQUENCE OF 37-66</scope>
    <scope>FUNCTION</scope>
    <scope>SUBCELLULAR LOCATION</scope>
    <scope>MASS SPECTROMETRY</scope>
    <source>
        <tissue evidence="4">Hemolymph</tissue>
    </source>
</reference>
<keyword id="KW-0044">Antibiotic</keyword>
<keyword id="KW-0929">Antimicrobial</keyword>
<keyword id="KW-0165">Cleavage on pair of basic residues</keyword>
<keyword id="KW-0211">Defensin</keyword>
<keyword id="KW-0903">Direct protein sequencing</keyword>
<keyword id="KW-1015">Disulfide bond</keyword>
<keyword id="KW-0964">Secreted</keyword>
<keyword id="KW-0732">Signal</keyword>
<sequence>MRGLCICLVFLLVCGLVSATAAAPAESEVAHLRVRRGFGCPLNQGACHNHCRSIRRRGGYCSGIIKQTCTCYRN</sequence>
<name>DEF1_DERVA</name>
<comment type="function">
    <text evidence="4">Antibacterial activity against Gram-positive and Gram-negative bacteria.</text>
</comment>
<comment type="subcellular location">
    <subcellularLocation>
        <location evidence="4">Secreted</location>
    </subcellularLocation>
</comment>
<comment type="tissue specificity">
    <text>Hemolymph.</text>
</comment>
<comment type="mass spectrometry"/>
<comment type="similarity">
    <text evidence="3">Belongs to the invertebrate defensin family. Type 2 subfamily.</text>
</comment>
<accession>Q86QI5</accession>
<feature type="signal peptide" evidence="2">
    <location>
        <begin position="1"/>
        <end position="22"/>
    </location>
</feature>
<feature type="propeptide" id="PRO_0000006760" evidence="6">
    <location>
        <begin position="23"/>
        <end position="36"/>
    </location>
</feature>
<feature type="chain" id="PRO_0000006761" description="Defensin" evidence="6">
    <location>
        <begin position="37"/>
        <end position="74"/>
    </location>
</feature>
<feature type="disulfide bond" evidence="1">
    <location>
        <begin position="40"/>
        <end position="61"/>
    </location>
</feature>
<feature type="disulfide bond" evidence="1">
    <location>
        <begin position="47"/>
        <end position="69"/>
    </location>
</feature>
<feature type="disulfide bond" evidence="1">
    <location>
        <begin position="51"/>
        <end position="71"/>
    </location>
</feature>
<feature type="sequence conflict" description="In Ref. 2; AA sequence." evidence="5" ref="2">
    <original>G</original>
    <variation>Q</variation>
    <location>
        <position position="63"/>
    </location>
</feature>
<gene>
    <name type="primary">VSNA1</name>
</gene>
<dbReference type="EMBL" id="AY181027">
    <property type="protein sequence ID" value="AAO24323.1"/>
    <property type="molecule type" value="mRNA"/>
</dbReference>
<dbReference type="SMR" id="Q86QI5"/>
<dbReference type="GO" id="GO:0005576">
    <property type="term" value="C:extracellular region"/>
    <property type="evidence" value="ECO:0000314"/>
    <property type="project" value="UniProtKB"/>
</dbReference>
<dbReference type="GO" id="GO:0050829">
    <property type="term" value="P:defense response to Gram-negative bacterium"/>
    <property type="evidence" value="ECO:0000314"/>
    <property type="project" value="UniProtKB"/>
</dbReference>
<dbReference type="GO" id="GO:0050830">
    <property type="term" value="P:defense response to Gram-positive bacterium"/>
    <property type="evidence" value="ECO:0000314"/>
    <property type="project" value="UniProtKB"/>
</dbReference>
<dbReference type="FunFam" id="3.30.30.10:FF:000006">
    <property type="entry name" value="Defensin DFS2"/>
    <property type="match status" value="1"/>
</dbReference>
<dbReference type="Gene3D" id="3.30.30.10">
    <property type="entry name" value="Knottin, scorpion toxin-like"/>
    <property type="match status" value="1"/>
</dbReference>
<dbReference type="InterPro" id="IPR001542">
    <property type="entry name" value="Defensin_invertebrate/fungal"/>
</dbReference>
<dbReference type="InterPro" id="IPR036574">
    <property type="entry name" value="Scorpion_toxin-like_sf"/>
</dbReference>
<dbReference type="Pfam" id="PF01097">
    <property type="entry name" value="Defensin_2"/>
    <property type="match status" value="1"/>
</dbReference>
<dbReference type="SUPFAM" id="SSF57095">
    <property type="entry name" value="Scorpion toxin-like"/>
    <property type="match status" value="1"/>
</dbReference>
<dbReference type="PROSITE" id="PS51378">
    <property type="entry name" value="INVERT_DEFENSINS"/>
    <property type="match status" value="1"/>
</dbReference>
<organism evidence="7">
    <name type="scientific">Dermacentor variabilis</name>
    <name type="common">American dog tick</name>
    <dbReference type="NCBI Taxonomy" id="34621"/>
    <lineage>
        <taxon>Eukaryota</taxon>
        <taxon>Metazoa</taxon>
        <taxon>Ecdysozoa</taxon>
        <taxon>Arthropoda</taxon>
        <taxon>Chelicerata</taxon>
        <taxon>Arachnida</taxon>
        <taxon>Acari</taxon>
        <taxon>Parasitiformes</taxon>
        <taxon>Ixodida</taxon>
        <taxon>Ixodoidea</taxon>
        <taxon>Ixodidae</taxon>
        <taxon>Rhipicephalinae</taxon>
        <taxon>Dermacentor</taxon>
    </lineage>
</organism>
<protein>
    <recommendedName>
        <fullName>Defensin</fullName>
    </recommendedName>
    <alternativeName>
        <fullName>Varisin A1</fullName>
    </alternativeName>
</protein>
<proteinExistence type="evidence at protein level"/>
<evidence type="ECO:0000250" key="1">
    <source>
        <dbReference type="UniProtKB" id="I1T3C7"/>
    </source>
</evidence>
<evidence type="ECO:0000255" key="2"/>
<evidence type="ECO:0000255" key="3">
    <source>
        <dbReference type="PROSITE-ProRule" id="PRU00710"/>
    </source>
</evidence>
<evidence type="ECO:0000269" key="4">
    <source>
    </source>
</evidence>
<evidence type="ECO:0000305" key="5"/>
<evidence type="ECO:0000305" key="6">
    <source>
    </source>
</evidence>
<evidence type="ECO:0000312" key="7">
    <source>
        <dbReference type="EMBL" id="AAO24323.1"/>
    </source>
</evidence>